<keyword id="KW-0408">Iron</keyword>
<keyword id="KW-0479">Metal-binding</keyword>
<keyword id="KW-0520">NAD</keyword>
<keyword id="KW-1185">Reference proteome</keyword>
<keyword id="KW-0784">Thiamine biosynthesis</keyword>
<keyword id="KW-0808">Transferase</keyword>
<feature type="chain" id="PRO_0000153943" description="Thiamine thiazole synthase">
    <location>
        <begin position="1"/>
        <end position="270"/>
    </location>
</feature>
<feature type="binding site" description="in other chain" evidence="1">
    <location>
        <position position="39"/>
    </location>
    <ligand>
        <name>NAD(+)</name>
        <dbReference type="ChEBI" id="CHEBI:57540"/>
        <note>ligand shared between two adjacent protomers</note>
    </ligand>
</feature>
<feature type="binding site" description="in other chain" evidence="1">
    <location>
        <begin position="58"/>
        <end position="59"/>
    </location>
    <ligand>
        <name>NAD(+)</name>
        <dbReference type="ChEBI" id="CHEBI:57540"/>
        <note>ligand shared between two adjacent protomers</note>
    </ligand>
</feature>
<feature type="binding site" description="in other chain" evidence="1">
    <location>
        <position position="66"/>
    </location>
    <ligand>
        <name>NAD(+)</name>
        <dbReference type="ChEBI" id="CHEBI:57540"/>
        <note>ligand shared between two adjacent protomers</note>
    </ligand>
</feature>
<feature type="binding site" description="in other chain" evidence="1">
    <location>
        <position position="130"/>
    </location>
    <ligand>
        <name>NAD(+)</name>
        <dbReference type="ChEBI" id="CHEBI:57540"/>
        <note>ligand shared between two adjacent protomers</note>
    </ligand>
</feature>
<feature type="binding site" evidence="1">
    <location>
        <position position="161"/>
    </location>
    <ligand>
        <name>Fe cation</name>
        <dbReference type="ChEBI" id="CHEBI:24875"/>
        <note>ligand shared between two adjacent protomers</note>
    </ligand>
</feature>
<feature type="binding site" evidence="1">
    <location>
        <position position="161"/>
    </location>
    <ligand>
        <name>NAD(+)</name>
        <dbReference type="ChEBI" id="CHEBI:57540"/>
        <note>ligand shared between two adjacent protomers</note>
    </ligand>
</feature>
<feature type="binding site" description="in other chain" evidence="1">
    <location>
        <position position="176"/>
    </location>
    <ligand>
        <name>Fe cation</name>
        <dbReference type="ChEBI" id="CHEBI:24875"/>
        <note>ligand shared between two adjacent protomers</note>
    </ligand>
</feature>
<feature type="binding site" description="in other chain" evidence="1">
    <location>
        <position position="223"/>
    </location>
    <ligand>
        <name>NAD(+)</name>
        <dbReference type="ChEBI" id="CHEBI:57540"/>
        <note>ligand shared between two adjacent protomers</note>
    </ligand>
</feature>
<feature type="binding site" evidence="1">
    <location>
        <position position="233"/>
    </location>
    <ligand>
        <name>glycine</name>
        <dbReference type="ChEBI" id="CHEBI:57305"/>
    </ligand>
</feature>
<feature type="modified residue" description="2,3-didehydroalanine (Cys)" evidence="1">
    <location>
        <position position="159"/>
    </location>
</feature>
<sequence>MVFARVNEADVTEAILDGFYSSLKKHLRSDVIVVGAGPAGLTAAWRLAEAGARVLIVEQNNYLGGGLWLGGYFMNPVTIRAPAQRILDELEVPYEAVKPGLYRTKGPLLAAKLAARALEAGAEVLNLTMLDDVIVENSRVAGVVVNWSPVQGLPRQITCVDPVGLRAEYVVDATGHDAVVTRKLAERGMVEASKLGPMWVERSEDLVVEKTGEVYPGLVVAGIAVAEVYGLPRMGPTFGAMLLSGEKAAALIGEKLGLKVKVAAAPASQA</sequence>
<gene>
    <name evidence="1" type="primary">thi4</name>
    <name type="ordered locus">APE_2149.1</name>
</gene>
<name>THI4_AERPE</name>
<dbReference type="EC" id="2.4.2.60" evidence="1"/>
<dbReference type="EMBL" id="BA000002">
    <property type="protein sequence ID" value="BAA81160.2"/>
    <property type="molecule type" value="Genomic_DNA"/>
</dbReference>
<dbReference type="PIR" id="H72521">
    <property type="entry name" value="H72521"/>
</dbReference>
<dbReference type="RefSeq" id="WP_010866823.1">
    <property type="nucleotide sequence ID" value="NC_000854.2"/>
</dbReference>
<dbReference type="SMR" id="Q9Y9Z0"/>
<dbReference type="EnsemblBacteria" id="BAA81160">
    <property type="protein sequence ID" value="BAA81160"/>
    <property type="gene ID" value="APE_2149.1"/>
</dbReference>
<dbReference type="GeneID" id="1445223"/>
<dbReference type="KEGG" id="ape:APE_2149.1"/>
<dbReference type="PATRIC" id="fig|272557.25.peg.1430"/>
<dbReference type="eggNOG" id="arCOG00574">
    <property type="taxonomic scope" value="Archaea"/>
</dbReference>
<dbReference type="UniPathway" id="UPA00060"/>
<dbReference type="Proteomes" id="UP000002518">
    <property type="component" value="Chromosome"/>
</dbReference>
<dbReference type="GO" id="GO:0160205">
    <property type="term" value="F:cysteine-dependent adenosine diphosphate thiazole synthase activity"/>
    <property type="evidence" value="ECO:0007669"/>
    <property type="project" value="RHEA"/>
</dbReference>
<dbReference type="GO" id="GO:0005506">
    <property type="term" value="F:iron ion binding"/>
    <property type="evidence" value="ECO:0007669"/>
    <property type="project" value="UniProtKB-UniRule"/>
</dbReference>
<dbReference type="GO" id="GO:0009228">
    <property type="term" value="P:thiamine biosynthetic process"/>
    <property type="evidence" value="ECO:0007669"/>
    <property type="project" value="UniProtKB-KW"/>
</dbReference>
<dbReference type="GO" id="GO:0009229">
    <property type="term" value="P:thiamine diphosphate biosynthetic process"/>
    <property type="evidence" value="ECO:0007669"/>
    <property type="project" value="UniProtKB-UniRule"/>
</dbReference>
<dbReference type="GO" id="GO:0052837">
    <property type="term" value="P:thiazole biosynthetic process"/>
    <property type="evidence" value="ECO:0007669"/>
    <property type="project" value="UniProtKB-UniRule"/>
</dbReference>
<dbReference type="Gene3D" id="3.50.50.60">
    <property type="entry name" value="FAD/NAD(P)-binding domain"/>
    <property type="match status" value="1"/>
</dbReference>
<dbReference type="HAMAP" id="MF_00304">
    <property type="entry name" value="Thi4"/>
    <property type="match status" value="1"/>
</dbReference>
<dbReference type="InterPro" id="IPR036188">
    <property type="entry name" value="FAD/NAD-bd_sf"/>
</dbReference>
<dbReference type="InterPro" id="IPR002922">
    <property type="entry name" value="Thi4_fam"/>
</dbReference>
<dbReference type="InterPro" id="IPR022828">
    <property type="entry name" value="Thi4_prok"/>
</dbReference>
<dbReference type="NCBIfam" id="TIGR00292">
    <property type="entry name" value="sulfide-dependent adenosine diphosphate thiazole synthase"/>
    <property type="match status" value="1"/>
</dbReference>
<dbReference type="PANTHER" id="PTHR43422">
    <property type="entry name" value="THIAMINE THIAZOLE SYNTHASE"/>
    <property type="match status" value="1"/>
</dbReference>
<dbReference type="PANTHER" id="PTHR43422:SF3">
    <property type="entry name" value="THIAMINE THIAZOLE SYNTHASE"/>
    <property type="match status" value="1"/>
</dbReference>
<dbReference type="Pfam" id="PF01946">
    <property type="entry name" value="Thi4"/>
    <property type="match status" value="1"/>
</dbReference>
<dbReference type="PRINTS" id="PR00420">
    <property type="entry name" value="RNGMNOXGNASE"/>
</dbReference>
<dbReference type="SUPFAM" id="SSF51905">
    <property type="entry name" value="FAD/NAD(P)-binding domain"/>
    <property type="match status" value="1"/>
</dbReference>
<proteinExistence type="inferred from homology"/>
<organism>
    <name type="scientific">Aeropyrum pernix (strain ATCC 700893 / DSM 11879 / JCM 9820 / NBRC 100138 / K1)</name>
    <dbReference type="NCBI Taxonomy" id="272557"/>
    <lineage>
        <taxon>Archaea</taxon>
        <taxon>Thermoproteota</taxon>
        <taxon>Thermoprotei</taxon>
        <taxon>Desulfurococcales</taxon>
        <taxon>Desulfurococcaceae</taxon>
        <taxon>Aeropyrum</taxon>
    </lineage>
</organism>
<reference key="1">
    <citation type="journal article" date="1999" name="DNA Res.">
        <title>Complete genome sequence of an aerobic hyper-thermophilic crenarchaeon, Aeropyrum pernix K1.</title>
        <authorList>
            <person name="Kawarabayasi Y."/>
            <person name="Hino Y."/>
            <person name="Horikawa H."/>
            <person name="Yamazaki S."/>
            <person name="Haikawa Y."/>
            <person name="Jin-no K."/>
            <person name="Takahashi M."/>
            <person name="Sekine M."/>
            <person name="Baba S."/>
            <person name="Ankai A."/>
            <person name="Kosugi H."/>
            <person name="Hosoyama A."/>
            <person name="Fukui S."/>
            <person name="Nagai Y."/>
            <person name="Nishijima K."/>
            <person name="Nakazawa H."/>
            <person name="Takamiya M."/>
            <person name="Masuda S."/>
            <person name="Funahashi T."/>
            <person name="Tanaka T."/>
            <person name="Kudoh Y."/>
            <person name="Yamazaki J."/>
            <person name="Kushida N."/>
            <person name="Oguchi A."/>
            <person name="Aoki K."/>
            <person name="Kubota K."/>
            <person name="Nakamura Y."/>
            <person name="Nomura N."/>
            <person name="Sako Y."/>
            <person name="Kikuchi H."/>
        </authorList>
    </citation>
    <scope>NUCLEOTIDE SEQUENCE [LARGE SCALE GENOMIC DNA]</scope>
    <source>
        <strain>ATCC 700893 / DSM 11879 / JCM 9820 / NBRC 100138 / K1</strain>
    </source>
</reference>
<protein>
    <recommendedName>
        <fullName evidence="1">Thiamine thiazole synthase</fullName>
        <ecNumber evidence="1">2.4.2.60</ecNumber>
    </recommendedName>
</protein>
<evidence type="ECO:0000255" key="1">
    <source>
        <dbReference type="HAMAP-Rule" id="MF_00304"/>
    </source>
</evidence>
<accession>Q9Y9Z0</accession>
<comment type="function">
    <text evidence="1">Involved in biosynthesis of the thiamine precursor thiazole. Catalyzes the conversion of NAD and glycine to adenosine diphosphate 5-(2-hydroxyethyl)-4-methylthiazole-2-carboxylic acid (ADT), an adenylated thiazole intermediate. The reaction includes an iron-dependent sulfide transfer from a conserved cysteine residue of the protein to a thiazole intermediate. The enzyme can only undergo a single turnover, which suggests it is a suicide enzyme.</text>
</comment>
<comment type="catalytic activity">
    <reaction evidence="1">
        <text>[ADP-thiazole synthase]-L-cysteine + glycine + NAD(+) = [ADP-thiazole synthase]-dehydroalanine + ADP-5-ethyl-4-methylthiazole-2-carboxylate + nicotinamide + 3 H2O + 2 H(+)</text>
        <dbReference type="Rhea" id="RHEA:55708"/>
        <dbReference type="Rhea" id="RHEA-COMP:14264"/>
        <dbReference type="Rhea" id="RHEA-COMP:14265"/>
        <dbReference type="ChEBI" id="CHEBI:15377"/>
        <dbReference type="ChEBI" id="CHEBI:15378"/>
        <dbReference type="ChEBI" id="CHEBI:17154"/>
        <dbReference type="ChEBI" id="CHEBI:29950"/>
        <dbReference type="ChEBI" id="CHEBI:57305"/>
        <dbReference type="ChEBI" id="CHEBI:57540"/>
        <dbReference type="ChEBI" id="CHEBI:90873"/>
        <dbReference type="ChEBI" id="CHEBI:139151"/>
        <dbReference type="EC" id="2.4.2.60"/>
    </reaction>
</comment>
<comment type="cofactor">
    <cofactor evidence="1">
        <name>Fe(2+)</name>
        <dbReference type="ChEBI" id="CHEBI:29033"/>
    </cofactor>
</comment>
<comment type="pathway">
    <text evidence="1">Cofactor biosynthesis; thiamine diphosphate biosynthesis.</text>
</comment>
<comment type="subunit">
    <text evidence="1">Homooctamer; tetramer of dimers.</text>
</comment>
<comment type="PTM">
    <text evidence="1">During the catalytic reaction, a sulfide is transferred from Cys-159 to a reaction intermediate, generating a dehydroalanine residue.</text>
</comment>
<comment type="similarity">
    <text evidence="1">Belongs to the THI4 family.</text>
</comment>